<keyword id="KW-0507">mRNA processing</keyword>
<keyword id="KW-0539">Nucleus</keyword>
<keyword id="KW-0597">Phosphoprotein</keyword>
<keyword id="KW-1185">Reference proteome</keyword>
<keyword id="KW-0819">tRNA processing</keyword>
<name>SEN15_MOUSE</name>
<reference key="1">
    <citation type="journal article" date="2005" name="Science">
        <title>The transcriptional landscape of the mammalian genome.</title>
        <authorList>
            <person name="Carninci P."/>
            <person name="Kasukawa T."/>
            <person name="Katayama S."/>
            <person name="Gough J."/>
            <person name="Frith M.C."/>
            <person name="Maeda N."/>
            <person name="Oyama R."/>
            <person name="Ravasi T."/>
            <person name="Lenhard B."/>
            <person name="Wells C."/>
            <person name="Kodzius R."/>
            <person name="Shimokawa K."/>
            <person name="Bajic V.B."/>
            <person name="Brenner S.E."/>
            <person name="Batalov S."/>
            <person name="Forrest A.R."/>
            <person name="Zavolan M."/>
            <person name="Davis M.J."/>
            <person name="Wilming L.G."/>
            <person name="Aidinis V."/>
            <person name="Allen J.E."/>
            <person name="Ambesi-Impiombato A."/>
            <person name="Apweiler R."/>
            <person name="Aturaliya R.N."/>
            <person name="Bailey T.L."/>
            <person name="Bansal M."/>
            <person name="Baxter L."/>
            <person name="Beisel K.W."/>
            <person name="Bersano T."/>
            <person name="Bono H."/>
            <person name="Chalk A.M."/>
            <person name="Chiu K.P."/>
            <person name="Choudhary V."/>
            <person name="Christoffels A."/>
            <person name="Clutterbuck D.R."/>
            <person name="Crowe M.L."/>
            <person name="Dalla E."/>
            <person name="Dalrymple B.P."/>
            <person name="de Bono B."/>
            <person name="Della Gatta G."/>
            <person name="di Bernardo D."/>
            <person name="Down T."/>
            <person name="Engstrom P."/>
            <person name="Fagiolini M."/>
            <person name="Faulkner G."/>
            <person name="Fletcher C.F."/>
            <person name="Fukushima T."/>
            <person name="Furuno M."/>
            <person name="Futaki S."/>
            <person name="Gariboldi M."/>
            <person name="Georgii-Hemming P."/>
            <person name="Gingeras T.R."/>
            <person name="Gojobori T."/>
            <person name="Green R.E."/>
            <person name="Gustincich S."/>
            <person name="Harbers M."/>
            <person name="Hayashi Y."/>
            <person name="Hensch T.K."/>
            <person name="Hirokawa N."/>
            <person name="Hill D."/>
            <person name="Huminiecki L."/>
            <person name="Iacono M."/>
            <person name="Ikeo K."/>
            <person name="Iwama A."/>
            <person name="Ishikawa T."/>
            <person name="Jakt M."/>
            <person name="Kanapin A."/>
            <person name="Katoh M."/>
            <person name="Kawasawa Y."/>
            <person name="Kelso J."/>
            <person name="Kitamura H."/>
            <person name="Kitano H."/>
            <person name="Kollias G."/>
            <person name="Krishnan S.P."/>
            <person name="Kruger A."/>
            <person name="Kummerfeld S.K."/>
            <person name="Kurochkin I.V."/>
            <person name="Lareau L.F."/>
            <person name="Lazarevic D."/>
            <person name="Lipovich L."/>
            <person name="Liu J."/>
            <person name="Liuni S."/>
            <person name="McWilliam S."/>
            <person name="Madan Babu M."/>
            <person name="Madera M."/>
            <person name="Marchionni L."/>
            <person name="Matsuda H."/>
            <person name="Matsuzawa S."/>
            <person name="Miki H."/>
            <person name="Mignone F."/>
            <person name="Miyake S."/>
            <person name="Morris K."/>
            <person name="Mottagui-Tabar S."/>
            <person name="Mulder N."/>
            <person name="Nakano N."/>
            <person name="Nakauchi H."/>
            <person name="Ng P."/>
            <person name="Nilsson R."/>
            <person name="Nishiguchi S."/>
            <person name="Nishikawa S."/>
            <person name="Nori F."/>
            <person name="Ohara O."/>
            <person name="Okazaki Y."/>
            <person name="Orlando V."/>
            <person name="Pang K.C."/>
            <person name="Pavan W.J."/>
            <person name="Pavesi G."/>
            <person name="Pesole G."/>
            <person name="Petrovsky N."/>
            <person name="Piazza S."/>
            <person name="Reed J."/>
            <person name="Reid J.F."/>
            <person name="Ring B.Z."/>
            <person name="Ringwald M."/>
            <person name="Rost B."/>
            <person name="Ruan Y."/>
            <person name="Salzberg S.L."/>
            <person name="Sandelin A."/>
            <person name="Schneider C."/>
            <person name="Schoenbach C."/>
            <person name="Sekiguchi K."/>
            <person name="Semple C.A."/>
            <person name="Seno S."/>
            <person name="Sessa L."/>
            <person name="Sheng Y."/>
            <person name="Shibata Y."/>
            <person name="Shimada H."/>
            <person name="Shimada K."/>
            <person name="Silva D."/>
            <person name="Sinclair B."/>
            <person name="Sperling S."/>
            <person name="Stupka E."/>
            <person name="Sugiura K."/>
            <person name="Sultana R."/>
            <person name="Takenaka Y."/>
            <person name="Taki K."/>
            <person name="Tammoja K."/>
            <person name="Tan S.L."/>
            <person name="Tang S."/>
            <person name="Taylor M.S."/>
            <person name="Tegner J."/>
            <person name="Teichmann S.A."/>
            <person name="Ueda H.R."/>
            <person name="van Nimwegen E."/>
            <person name="Verardo R."/>
            <person name="Wei C.L."/>
            <person name="Yagi K."/>
            <person name="Yamanishi H."/>
            <person name="Zabarovsky E."/>
            <person name="Zhu S."/>
            <person name="Zimmer A."/>
            <person name="Hide W."/>
            <person name="Bult C."/>
            <person name="Grimmond S.M."/>
            <person name="Teasdale R.D."/>
            <person name="Liu E.T."/>
            <person name="Brusic V."/>
            <person name="Quackenbush J."/>
            <person name="Wahlestedt C."/>
            <person name="Mattick J.S."/>
            <person name="Hume D.A."/>
            <person name="Kai C."/>
            <person name="Sasaki D."/>
            <person name="Tomaru Y."/>
            <person name="Fukuda S."/>
            <person name="Kanamori-Katayama M."/>
            <person name="Suzuki M."/>
            <person name="Aoki J."/>
            <person name="Arakawa T."/>
            <person name="Iida J."/>
            <person name="Imamura K."/>
            <person name="Itoh M."/>
            <person name="Kato T."/>
            <person name="Kawaji H."/>
            <person name="Kawagashira N."/>
            <person name="Kawashima T."/>
            <person name="Kojima M."/>
            <person name="Kondo S."/>
            <person name="Konno H."/>
            <person name="Nakano K."/>
            <person name="Ninomiya N."/>
            <person name="Nishio T."/>
            <person name="Okada M."/>
            <person name="Plessy C."/>
            <person name="Shibata K."/>
            <person name="Shiraki T."/>
            <person name="Suzuki S."/>
            <person name="Tagami M."/>
            <person name="Waki K."/>
            <person name="Watahiki A."/>
            <person name="Okamura-Oho Y."/>
            <person name="Suzuki H."/>
            <person name="Kawai J."/>
            <person name="Hayashizaki Y."/>
        </authorList>
    </citation>
    <scope>NUCLEOTIDE SEQUENCE [LARGE SCALE MRNA]</scope>
    <source>
        <strain>C57BL/6J</strain>
        <tissue>Embryo</tissue>
    </source>
</reference>
<reference key="2">
    <citation type="journal article" date="2004" name="Genome Res.">
        <title>The status, quality, and expansion of the NIH full-length cDNA project: the Mammalian Gene Collection (MGC).</title>
        <authorList>
            <consortium name="The MGC Project Team"/>
        </authorList>
    </citation>
    <scope>NUCLEOTIDE SEQUENCE [LARGE SCALE MRNA]</scope>
    <source>
        <strain>FVB/N-3</strain>
        <tissue>Brain</tissue>
        <tissue>Mammary gland</tissue>
    </source>
</reference>
<reference key="3">
    <citation type="journal article" date="2010" name="Cell">
        <title>A tissue-specific atlas of mouse protein phosphorylation and expression.</title>
        <authorList>
            <person name="Huttlin E.L."/>
            <person name="Jedrychowski M.P."/>
            <person name="Elias J.E."/>
            <person name="Goswami T."/>
            <person name="Rad R."/>
            <person name="Beausoleil S.A."/>
            <person name="Villen J."/>
            <person name="Haas W."/>
            <person name="Sowa M.E."/>
            <person name="Gygi S.P."/>
        </authorList>
    </citation>
    <scope>IDENTIFICATION BY MASS SPECTROMETRY [LARGE SCALE ANALYSIS]</scope>
    <source>
        <tissue>Brain</tissue>
        <tissue>Heart</tissue>
        <tissue>Kidney</tissue>
        <tissue>Liver</tissue>
        <tissue>Lung</tissue>
        <tissue>Pancreas</tissue>
        <tissue>Spleen</tissue>
        <tissue>Testis</tissue>
    </source>
</reference>
<sequence>MEERSDSEPTPGCSGPGPAPVRDGGGAHTWAPEDAWMGTHPKYLEMMELDIGDATQVYIAFLVYLDLMESKSWHEVNCVGIPELQLICLLGTEIEGEGLQTVVPTPISASLSHNRIREILKASRKLQGDPELPMSFTLAIVESDSTIVYYKLTDGFMLPDPQNISLRR</sequence>
<protein>
    <recommendedName>
        <fullName>tRNA-splicing endonuclease subunit Sen15</fullName>
    </recommendedName>
    <alternativeName>
        <fullName>tRNA-intron endonuclease Sen15</fullName>
    </alternativeName>
</protein>
<feature type="chain" id="PRO_0000194024" description="tRNA-splicing endonuclease subunit Sen15">
    <location>
        <begin position="1"/>
        <end position="168"/>
    </location>
</feature>
<feature type="region of interest" description="Disordered" evidence="3">
    <location>
        <begin position="1"/>
        <end position="32"/>
    </location>
</feature>
<feature type="modified residue" description="Phosphoserine" evidence="2">
    <location>
        <position position="7"/>
    </location>
</feature>
<feature type="modified residue" description="Phosphoserine" evidence="2">
    <location>
        <position position="165"/>
    </location>
</feature>
<feature type="sequence conflict" description="In Ref. 1; BAB30855." evidence="4" ref="1">
    <original>SDSE</original>
    <variation>TSSK</variation>
    <location>
        <begin position="5"/>
        <end position="8"/>
    </location>
</feature>
<dbReference type="EMBL" id="AK017650">
    <property type="protein sequence ID" value="BAB30855.1"/>
    <property type="molecule type" value="mRNA"/>
</dbReference>
<dbReference type="EMBL" id="BC024342">
    <property type="protein sequence ID" value="AAH24342.1"/>
    <property type="molecule type" value="mRNA"/>
</dbReference>
<dbReference type="EMBL" id="BC145701">
    <property type="protein sequence ID" value="AAI45702.1"/>
    <property type="molecule type" value="mRNA"/>
</dbReference>
<dbReference type="CCDS" id="CCDS15363.1"/>
<dbReference type="RefSeq" id="NP_079953.2">
    <property type="nucleotide sequence ID" value="NM_025677.3"/>
</dbReference>
<dbReference type="SMR" id="Q8R3W5"/>
<dbReference type="BioGRID" id="211612">
    <property type="interactions" value="1"/>
</dbReference>
<dbReference type="FunCoup" id="Q8R3W5">
    <property type="interactions" value="49"/>
</dbReference>
<dbReference type="STRING" id="10090.ENSMUSP00000015124"/>
<dbReference type="GlyGen" id="Q8R3W5">
    <property type="glycosylation" value="2 sites"/>
</dbReference>
<dbReference type="PhosphoSitePlus" id="Q8R3W5"/>
<dbReference type="PaxDb" id="10090-ENSMUSP00000015124"/>
<dbReference type="PeptideAtlas" id="Q8R3W5"/>
<dbReference type="ProteomicsDB" id="256777"/>
<dbReference type="Pumba" id="Q8R3W5"/>
<dbReference type="GeneID" id="66637"/>
<dbReference type="KEGG" id="mmu:66637"/>
<dbReference type="AGR" id="MGI:1913887"/>
<dbReference type="CTD" id="116461"/>
<dbReference type="MGI" id="MGI:1913887">
    <property type="gene designation" value="Tsen15"/>
</dbReference>
<dbReference type="eggNOG" id="ENOG502S21U">
    <property type="taxonomic scope" value="Eukaryota"/>
</dbReference>
<dbReference type="InParanoid" id="Q8R3W5"/>
<dbReference type="OrthoDB" id="10002170at2759"/>
<dbReference type="PhylomeDB" id="Q8R3W5"/>
<dbReference type="BioGRID-ORCS" id="66637">
    <property type="hits" value="21 hits in 77 CRISPR screens"/>
</dbReference>
<dbReference type="ChiTaRS" id="Tsen15">
    <property type="organism name" value="mouse"/>
</dbReference>
<dbReference type="PRO" id="PR:Q8R3W5"/>
<dbReference type="Proteomes" id="UP000000589">
    <property type="component" value="Unplaced"/>
</dbReference>
<dbReference type="RNAct" id="Q8R3W5">
    <property type="molecule type" value="protein"/>
</dbReference>
<dbReference type="GO" id="GO:0005730">
    <property type="term" value="C:nucleolus"/>
    <property type="evidence" value="ECO:0007669"/>
    <property type="project" value="UniProtKB-SubCell"/>
</dbReference>
<dbReference type="GO" id="GO:0003676">
    <property type="term" value="F:nucleic acid binding"/>
    <property type="evidence" value="ECO:0007669"/>
    <property type="project" value="InterPro"/>
</dbReference>
<dbReference type="GO" id="GO:0006397">
    <property type="term" value="P:mRNA processing"/>
    <property type="evidence" value="ECO:0007669"/>
    <property type="project" value="UniProtKB-KW"/>
</dbReference>
<dbReference type="GO" id="GO:0006388">
    <property type="term" value="P:tRNA splicing, via endonucleolytic cleavage and ligation"/>
    <property type="evidence" value="ECO:0007669"/>
    <property type="project" value="InterPro"/>
</dbReference>
<dbReference type="FunFam" id="3.40.1350.10:FF:000003">
    <property type="entry name" value="tRNA-splicing endonuclease subunit Sen15 isoform X2"/>
    <property type="match status" value="1"/>
</dbReference>
<dbReference type="Gene3D" id="3.40.1350.10">
    <property type="match status" value="1"/>
</dbReference>
<dbReference type="InterPro" id="IPR018593">
    <property type="entry name" value="tRNA-endonuc_su_Sen15"/>
</dbReference>
<dbReference type="InterPro" id="IPR011856">
    <property type="entry name" value="tRNA_endonuc-like_dom_sf"/>
</dbReference>
<dbReference type="InterPro" id="IPR036167">
    <property type="entry name" value="tRNA_intron_Endo_cat-like_sf"/>
</dbReference>
<dbReference type="PANTHER" id="PTHR28582">
    <property type="entry name" value="TRNA-SPLICING ENDONUCLEASE SUBUNIT SEN15"/>
    <property type="match status" value="1"/>
</dbReference>
<dbReference type="PANTHER" id="PTHR28582:SF1">
    <property type="entry name" value="TRNA-SPLICING ENDONUCLEASE SUBUNIT SEN15"/>
    <property type="match status" value="1"/>
</dbReference>
<dbReference type="Pfam" id="PF09631">
    <property type="entry name" value="Sen15"/>
    <property type="match status" value="1"/>
</dbReference>
<dbReference type="SUPFAM" id="SSF53032">
    <property type="entry name" value="tRNA-intron endonuclease catalytic domain-like"/>
    <property type="match status" value="1"/>
</dbReference>
<gene>
    <name type="primary">Tsen15</name>
    <name type="synonym">Sen15</name>
</gene>
<organism>
    <name type="scientific">Mus musculus</name>
    <name type="common">Mouse</name>
    <dbReference type="NCBI Taxonomy" id="10090"/>
    <lineage>
        <taxon>Eukaryota</taxon>
        <taxon>Metazoa</taxon>
        <taxon>Chordata</taxon>
        <taxon>Craniata</taxon>
        <taxon>Vertebrata</taxon>
        <taxon>Euteleostomi</taxon>
        <taxon>Mammalia</taxon>
        <taxon>Eutheria</taxon>
        <taxon>Euarchontoglires</taxon>
        <taxon>Glires</taxon>
        <taxon>Rodentia</taxon>
        <taxon>Myomorpha</taxon>
        <taxon>Muroidea</taxon>
        <taxon>Muridae</taxon>
        <taxon>Murinae</taxon>
        <taxon>Mus</taxon>
        <taxon>Mus</taxon>
    </lineage>
</organism>
<evidence type="ECO:0000250" key="1"/>
<evidence type="ECO:0000250" key="2">
    <source>
        <dbReference type="UniProtKB" id="Q8WW01"/>
    </source>
</evidence>
<evidence type="ECO:0000256" key="3">
    <source>
        <dbReference type="SAM" id="MobiDB-lite"/>
    </source>
</evidence>
<evidence type="ECO:0000305" key="4"/>
<accession>Q8R3W5</accession>
<accession>A6H601</accession>
<accession>Q9CQW8</accession>
<accession>Q9CYI5</accession>
<comment type="function">
    <text evidence="1">Non-catalytic subunit of the tRNA-splicing endonuclease complex, a complex responsible for identification and cleavage of the splice sites in pre-tRNA. It cleaves pre-tRNA at the 5' and 3' splice sites to release the intron. The products are an intron and two tRNA half-molecules bearing 2',3' cyclic phosphate and 5'-OH termini. There are no conserved sequences at the splice sites, but the intron is invariably located at the same site in the gene, placing the splice sites an invariant distance from the constant structural features of the tRNA body. The tRNA splicing endonuclease is also involved in mRNA processing via its association with pre-mRNA 3'-end processing factors, establishing a link between pre-tRNA splicing and pre-mRNA 3'-end formation, suggesting that the endonuclease subunits function in multiple RNA-processing events (By similarity).</text>
</comment>
<comment type="subunit">
    <text evidence="1 2">Homodimer. tRNA splicing endonuclease is a heterotetramer composed of TSEN2, TSEN15, TSEN34/LENG5 and TSEN54. tRNA splicing endonuclease complex also contains proteins of the pre-mRNA 3' end processing machinery such as CLP1, CPSF1, CPSF4 and CSTF2 (By similarity).</text>
</comment>
<comment type="subcellular location">
    <subcellularLocation>
        <location evidence="4">Nucleus</location>
    </subcellularLocation>
    <subcellularLocation>
        <location evidence="4">Nucleus</location>
        <location evidence="4">Nucleolus</location>
    </subcellularLocation>
    <text evidence="4">May be transiently localized in the nucleolus.</text>
</comment>
<comment type="similarity">
    <text evidence="4">Belongs to the SEN15 family.</text>
</comment>
<comment type="caution">
    <text evidence="4">Although only weakly related to the S.cerevisiae SEN15 protein, it probably displays the same function within the tRNA splicing endonuclease complex.</text>
</comment>
<proteinExistence type="evidence at protein level"/>